<sequence length="174" mass="19688">MQHSFYQEDELLNNEISNRGFLLTKIDDIIGWARAHSLWPMTFGLACCAVEMMQAASSRYDMDRFGMLFRPSPRQSDLMIVAGTLTNKMAPALRKVYDQMAVPKWVLSMGSCANGGGYYHFSYSVVRGCDRIVPVDVYVPGCPPTAEALIYGLMQLQKKIKRTTGFKYDARQIH</sequence>
<accession>A8GN54</accession>
<keyword id="KW-0004">4Fe-4S</keyword>
<keyword id="KW-0997">Cell inner membrane</keyword>
<keyword id="KW-1003">Cell membrane</keyword>
<keyword id="KW-0408">Iron</keyword>
<keyword id="KW-0411">Iron-sulfur</keyword>
<keyword id="KW-0472">Membrane</keyword>
<keyword id="KW-0479">Metal-binding</keyword>
<keyword id="KW-0520">NAD</keyword>
<keyword id="KW-0874">Quinone</keyword>
<keyword id="KW-1278">Translocase</keyword>
<keyword id="KW-0813">Transport</keyword>
<keyword id="KW-0830">Ubiquinone</keyword>
<comment type="function">
    <text evidence="1">NDH-1 shuttles electrons from NADH, via FMN and iron-sulfur (Fe-S) centers, to quinones in the respiratory chain. Couples the redox reaction to proton translocation (for every two electrons transferred, four hydrogen ions are translocated across the cytoplasmic membrane), and thus conserves the redox energy in a proton gradient (By similarity).</text>
</comment>
<comment type="catalytic activity">
    <reaction evidence="2">
        <text>a quinone + NADH + 5 H(+)(in) = a quinol + NAD(+) + 4 H(+)(out)</text>
        <dbReference type="Rhea" id="RHEA:57888"/>
        <dbReference type="ChEBI" id="CHEBI:15378"/>
        <dbReference type="ChEBI" id="CHEBI:24646"/>
        <dbReference type="ChEBI" id="CHEBI:57540"/>
        <dbReference type="ChEBI" id="CHEBI:57945"/>
        <dbReference type="ChEBI" id="CHEBI:132124"/>
    </reaction>
</comment>
<comment type="cofactor">
    <cofactor evidence="2">
        <name>[4Fe-4S] cluster</name>
        <dbReference type="ChEBI" id="CHEBI:49883"/>
    </cofactor>
    <text evidence="2">Binds 1 [4Fe-4S] cluster.</text>
</comment>
<comment type="subunit">
    <text evidence="2">NDH-1 is composed of 14 different subunits. Subunits NuoB, C, D, E, F, and G constitute the peripheral sector of the complex.</text>
</comment>
<comment type="subcellular location">
    <subcellularLocation>
        <location evidence="2">Cell inner membrane</location>
        <topology evidence="2">Peripheral membrane protein</topology>
        <orientation evidence="2">Cytoplasmic side</orientation>
    </subcellularLocation>
</comment>
<comment type="similarity">
    <text evidence="2">Belongs to the complex I 20 kDa subunit family.</text>
</comment>
<proteinExistence type="inferred from homology"/>
<evidence type="ECO:0000250" key="1"/>
<evidence type="ECO:0000255" key="2">
    <source>
        <dbReference type="HAMAP-Rule" id="MF_01356"/>
    </source>
</evidence>
<protein>
    <recommendedName>
        <fullName evidence="2">NADH-quinone oxidoreductase subunit B</fullName>
        <ecNumber evidence="2">7.1.1.-</ecNumber>
    </recommendedName>
    <alternativeName>
        <fullName evidence="2">NADH dehydrogenase I subunit B</fullName>
    </alternativeName>
    <alternativeName>
        <fullName evidence="2">NDH-1 subunit B</fullName>
    </alternativeName>
</protein>
<organism>
    <name type="scientific">Rickettsia akari (strain Hartford)</name>
    <dbReference type="NCBI Taxonomy" id="293614"/>
    <lineage>
        <taxon>Bacteria</taxon>
        <taxon>Pseudomonadati</taxon>
        <taxon>Pseudomonadota</taxon>
        <taxon>Alphaproteobacteria</taxon>
        <taxon>Rickettsiales</taxon>
        <taxon>Rickettsiaceae</taxon>
        <taxon>Rickettsieae</taxon>
        <taxon>Rickettsia</taxon>
        <taxon>spotted fever group</taxon>
    </lineage>
</organism>
<gene>
    <name evidence="2" type="primary">nuoB</name>
    <name type="ordered locus">A1C_02670</name>
</gene>
<feature type="chain" id="PRO_0000358471" description="NADH-quinone oxidoreductase subunit B">
    <location>
        <begin position="1"/>
        <end position="174"/>
    </location>
</feature>
<feature type="binding site" evidence="2">
    <location>
        <position position="47"/>
    </location>
    <ligand>
        <name>[4Fe-4S] cluster</name>
        <dbReference type="ChEBI" id="CHEBI:49883"/>
    </ligand>
</feature>
<feature type="binding site" evidence="2">
    <location>
        <position position="48"/>
    </location>
    <ligand>
        <name>[4Fe-4S] cluster</name>
        <dbReference type="ChEBI" id="CHEBI:49883"/>
    </ligand>
</feature>
<feature type="binding site" evidence="2">
    <location>
        <position position="112"/>
    </location>
    <ligand>
        <name>[4Fe-4S] cluster</name>
        <dbReference type="ChEBI" id="CHEBI:49883"/>
    </ligand>
</feature>
<feature type="binding site" evidence="2">
    <location>
        <position position="142"/>
    </location>
    <ligand>
        <name>[4Fe-4S] cluster</name>
        <dbReference type="ChEBI" id="CHEBI:49883"/>
    </ligand>
</feature>
<name>NUOB_RICAH</name>
<dbReference type="EC" id="7.1.1.-" evidence="2"/>
<dbReference type="EMBL" id="CP000847">
    <property type="protein sequence ID" value="ABV74829.1"/>
    <property type="molecule type" value="Genomic_DNA"/>
</dbReference>
<dbReference type="RefSeq" id="WP_012149463.1">
    <property type="nucleotide sequence ID" value="NC_009881.1"/>
</dbReference>
<dbReference type="SMR" id="A8GN54"/>
<dbReference type="STRING" id="293614.A1C_02670"/>
<dbReference type="KEGG" id="rak:A1C_02670"/>
<dbReference type="eggNOG" id="COG0377">
    <property type="taxonomic scope" value="Bacteria"/>
</dbReference>
<dbReference type="HOGENOM" id="CLU_055737_7_0_5"/>
<dbReference type="Proteomes" id="UP000006830">
    <property type="component" value="Chromosome"/>
</dbReference>
<dbReference type="GO" id="GO:0005886">
    <property type="term" value="C:plasma membrane"/>
    <property type="evidence" value="ECO:0007669"/>
    <property type="project" value="UniProtKB-SubCell"/>
</dbReference>
<dbReference type="GO" id="GO:0045271">
    <property type="term" value="C:respiratory chain complex I"/>
    <property type="evidence" value="ECO:0007669"/>
    <property type="project" value="TreeGrafter"/>
</dbReference>
<dbReference type="GO" id="GO:0051539">
    <property type="term" value="F:4 iron, 4 sulfur cluster binding"/>
    <property type="evidence" value="ECO:0007669"/>
    <property type="project" value="UniProtKB-KW"/>
</dbReference>
<dbReference type="GO" id="GO:0005506">
    <property type="term" value="F:iron ion binding"/>
    <property type="evidence" value="ECO:0007669"/>
    <property type="project" value="UniProtKB-UniRule"/>
</dbReference>
<dbReference type="GO" id="GO:0008137">
    <property type="term" value="F:NADH dehydrogenase (ubiquinone) activity"/>
    <property type="evidence" value="ECO:0007669"/>
    <property type="project" value="InterPro"/>
</dbReference>
<dbReference type="GO" id="GO:0050136">
    <property type="term" value="F:NADH:ubiquinone reductase (non-electrogenic) activity"/>
    <property type="evidence" value="ECO:0007669"/>
    <property type="project" value="UniProtKB-UniRule"/>
</dbReference>
<dbReference type="GO" id="GO:0048038">
    <property type="term" value="F:quinone binding"/>
    <property type="evidence" value="ECO:0007669"/>
    <property type="project" value="UniProtKB-KW"/>
</dbReference>
<dbReference type="GO" id="GO:0009060">
    <property type="term" value="P:aerobic respiration"/>
    <property type="evidence" value="ECO:0007669"/>
    <property type="project" value="TreeGrafter"/>
</dbReference>
<dbReference type="GO" id="GO:0015990">
    <property type="term" value="P:electron transport coupled proton transport"/>
    <property type="evidence" value="ECO:0007669"/>
    <property type="project" value="TreeGrafter"/>
</dbReference>
<dbReference type="FunFam" id="3.40.50.12280:FF:000001">
    <property type="entry name" value="NADH-quinone oxidoreductase subunit B 2"/>
    <property type="match status" value="1"/>
</dbReference>
<dbReference type="Gene3D" id="3.40.50.12280">
    <property type="match status" value="1"/>
</dbReference>
<dbReference type="HAMAP" id="MF_01356">
    <property type="entry name" value="NDH1_NuoB"/>
    <property type="match status" value="1"/>
</dbReference>
<dbReference type="InterPro" id="IPR006137">
    <property type="entry name" value="NADH_UbQ_OxRdtase-like_20kDa"/>
</dbReference>
<dbReference type="InterPro" id="IPR006138">
    <property type="entry name" value="NADH_UQ_OxRdtase_20Kd_su"/>
</dbReference>
<dbReference type="NCBIfam" id="TIGR01957">
    <property type="entry name" value="nuoB_fam"/>
    <property type="match status" value="1"/>
</dbReference>
<dbReference type="NCBIfam" id="NF005012">
    <property type="entry name" value="PRK06411.1"/>
    <property type="match status" value="1"/>
</dbReference>
<dbReference type="PANTHER" id="PTHR11995">
    <property type="entry name" value="NADH DEHYDROGENASE"/>
    <property type="match status" value="1"/>
</dbReference>
<dbReference type="PANTHER" id="PTHR11995:SF14">
    <property type="entry name" value="NADH DEHYDROGENASE [UBIQUINONE] IRON-SULFUR PROTEIN 7, MITOCHONDRIAL"/>
    <property type="match status" value="1"/>
</dbReference>
<dbReference type="Pfam" id="PF01058">
    <property type="entry name" value="Oxidored_q6"/>
    <property type="match status" value="1"/>
</dbReference>
<dbReference type="SUPFAM" id="SSF56770">
    <property type="entry name" value="HydA/Nqo6-like"/>
    <property type="match status" value="1"/>
</dbReference>
<dbReference type="PROSITE" id="PS01150">
    <property type="entry name" value="COMPLEX1_20K"/>
    <property type="match status" value="1"/>
</dbReference>
<reference key="1">
    <citation type="submission" date="2007-09" db="EMBL/GenBank/DDBJ databases">
        <title>Complete genome sequence of Rickettsia akari.</title>
        <authorList>
            <person name="Madan A."/>
            <person name="Fahey J."/>
            <person name="Helton E."/>
            <person name="Ketteman M."/>
            <person name="Madan A."/>
            <person name="Rodrigues S."/>
            <person name="Sanchez A."/>
            <person name="Whiting M."/>
            <person name="Dasch G."/>
            <person name="Eremeeva M."/>
        </authorList>
    </citation>
    <scope>NUCLEOTIDE SEQUENCE [LARGE SCALE GENOMIC DNA]</scope>
    <source>
        <strain>Hartford</strain>
    </source>
</reference>